<sequence>MDIRVDRKAFAGHTVLHDINLSLQTGEIVSLLGPSGCGKSTLLRIVAGLEQDFRGSVERIQGQVAFVFQEPRLMPWLTVEQNIGFSDDNGYDRKWVSQLIEEVGLSGFANALPKALSGGMAQRVAIARGLYSHPTILLLDEPFSAVDAFTRMKLQDLLLQLAERHAITLLLVTHDVDEALYLSDRVLVMGSRPGTITHELPVGLQTPRDRRDPLLARLKAEALTELHQAQVI</sequence>
<comment type="function">
    <text evidence="1">Part of the ABC transporter complex SsuABC involved in aliphatic sulfonates import. Responsible for energy coupling to the transport system.</text>
</comment>
<comment type="catalytic activity">
    <reaction evidence="1">
        <text>ATP + H2O + aliphatic sulfonate-[sulfonate-binding protein]Side 1 = ADP + phosphate + aliphatic sulfonateSide 2 + [sulfonate-binding protein]Side 1.</text>
        <dbReference type="EC" id="7.6.2.14"/>
    </reaction>
</comment>
<comment type="subunit">
    <text evidence="1">The complex is composed of two ATP-binding proteins (SsuB), two transmembrane proteins (SsuC) and a solute-binding protein (SsuA).</text>
</comment>
<comment type="subcellular location">
    <subcellularLocation>
        <location evidence="1">Cell inner membrane</location>
        <topology evidence="1">Peripheral membrane protein</topology>
    </subcellularLocation>
</comment>
<comment type="similarity">
    <text evidence="1">Belongs to the ABC transporter superfamily. Aliphatic sulfonates importer (TC 3.A.1.17.2) family.</text>
</comment>
<dbReference type="EC" id="7.6.2.14" evidence="1"/>
<dbReference type="EMBL" id="AE016853">
    <property type="protein sequence ID" value="AAO56286.1"/>
    <property type="molecule type" value="Genomic_DNA"/>
</dbReference>
<dbReference type="RefSeq" id="NP_792591.1">
    <property type="nucleotide sequence ID" value="NC_004578.1"/>
</dbReference>
<dbReference type="SMR" id="Q881U6"/>
<dbReference type="STRING" id="223283.PSPTO_2786"/>
<dbReference type="KEGG" id="pst:PSPTO_2786"/>
<dbReference type="PATRIC" id="fig|223283.9.peg.2844"/>
<dbReference type="eggNOG" id="COG1116">
    <property type="taxonomic scope" value="Bacteria"/>
</dbReference>
<dbReference type="HOGENOM" id="CLU_000604_1_22_6"/>
<dbReference type="OrthoDB" id="9802264at2"/>
<dbReference type="PhylomeDB" id="Q881U6"/>
<dbReference type="Proteomes" id="UP000002515">
    <property type="component" value="Chromosome"/>
</dbReference>
<dbReference type="GO" id="GO:0005886">
    <property type="term" value="C:plasma membrane"/>
    <property type="evidence" value="ECO:0007669"/>
    <property type="project" value="UniProtKB-SubCell"/>
</dbReference>
<dbReference type="GO" id="GO:0005524">
    <property type="term" value="F:ATP binding"/>
    <property type="evidence" value="ECO:0007669"/>
    <property type="project" value="UniProtKB-KW"/>
</dbReference>
<dbReference type="GO" id="GO:0016887">
    <property type="term" value="F:ATP hydrolysis activity"/>
    <property type="evidence" value="ECO:0007669"/>
    <property type="project" value="InterPro"/>
</dbReference>
<dbReference type="CDD" id="cd03293">
    <property type="entry name" value="ABC_NrtD_SsuB_transporters"/>
    <property type="match status" value="1"/>
</dbReference>
<dbReference type="Gene3D" id="3.40.50.300">
    <property type="entry name" value="P-loop containing nucleotide triphosphate hydrolases"/>
    <property type="match status" value="1"/>
</dbReference>
<dbReference type="InterPro" id="IPR003593">
    <property type="entry name" value="AAA+_ATPase"/>
</dbReference>
<dbReference type="InterPro" id="IPR003439">
    <property type="entry name" value="ABC_transporter-like_ATP-bd"/>
</dbReference>
<dbReference type="InterPro" id="IPR017871">
    <property type="entry name" value="ABC_transporter-like_CS"/>
</dbReference>
<dbReference type="InterPro" id="IPR050166">
    <property type="entry name" value="ABC_transporter_ATP-bind"/>
</dbReference>
<dbReference type="InterPro" id="IPR027417">
    <property type="entry name" value="P-loop_NTPase"/>
</dbReference>
<dbReference type="PANTHER" id="PTHR42788:SF19">
    <property type="entry name" value="ALIPHATIC SULFONATES IMPORT ATP-BINDING PROTEIN SSUB 2"/>
    <property type="match status" value="1"/>
</dbReference>
<dbReference type="PANTHER" id="PTHR42788">
    <property type="entry name" value="TAURINE IMPORT ATP-BINDING PROTEIN-RELATED"/>
    <property type="match status" value="1"/>
</dbReference>
<dbReference type="Pfam" id="PF00005">
    <property type="entry name" value="ABC_tran"/>
    <property type="match status" value="1"/>
</dbReference>
<dbReference type="SMART" id="SM00382">
    <property type="entry name" value="AAA"/>
    <property type="match status" value="1"/>
</dbReference>
<dbReference type="SUPFAM" id="SSF52540">
    <property type="entry name" value="P-loop containing nucleoside triphosphate hydrolases"/>
    <property type="match status" value="1"/>
</dbReference>
<dbReference type="PROSITE" id="PS00211">
    <property type="entry name" value="ABC_TRANSPORTER_1"/>
    <property type="match status" value="1"/>
</dbReference>
<dbReference type="PROSITE" id="PS50893">
    <property type="entry name" value="ABC_TRANSPORTER_2"/>
    <property type="match status" value="1"/>
</dbReference>
<dbReference type="PROSITE" id="PS51291">
    <property type="entry name" value="SSUB"/>
    <property type="match status" value="1"/>
</dbReference>
<evidence type="ECO:0000255" key="1">
    <source>
        <dbReference type="HAMAP-Rule" id="MF_01724"/>
    </source>
</evidence>
<protein>
    <recommendedName>
        <fullName evidence="1">Aliphatic sulfonates import ATP-binding protein SsuB 2</fullName>
        <ecNumber evidence="1">7.6.2.14</ecNumber>
    </recommendedName>
</protein>
<keyword id="KW-0067">ATP-binding</keyword>
<keyword id="KW-0997">Cell inner membrane</keyword>
<keyword id="KW-1003">Cell membrane</keyword>
<keyword id="KW-0472">Membrane</keyword>
<keyword id="KW-0547">Nucleotide-binding</keyword>
<keyword id="KW-1185">Reference proteome</keyword>
<keyword id="KW-1278">Translocase</keyword>
<keyword id="KW-0813">Transport</keyword>
<organism>
    <name type="scientific">Pseudomonas syringae pv. tomato (strain ATCC BAA-871 / DC3000)</name>
    <dbReference type="NCBI Taxonomy" id="223283"/>
    <lineage>
        <taxon>Bacteria</taxon>
        <taxon>Pseudomonadati</taxon>
        <taxon>Pseudomonadota</taxon>
        <taxon>Gammaproteobacteria</taxon>
        <taxon>Pseudomonadales</taxon>
        <taxon>Pseudomonadaceae</taxon>
        <taxon>Pseudomonas</taxon>
    </lineage>
</organism>
<gene>
    <name evidence="1" type="primary">ssuB2</name>
    <name type="ordered locus">PSPTO_2786</name>
</gene>
<feature type="chain" id="PRO_0000279944" description="Aliphatic sulfonates import ATP-binding protein SsuB 2">
    <location>
        <begin position="1"/>
        <end position="232"/>
    </location>
</feature>
<feature type="domain" description="ABC transporter" evidence="1">
    <location>
        <begin position="1"/>
        <end position="216"/>
    </location>
</feature>
<feature type="binding site" evidence="1">
    <location>
        <begin position="33"/>
        <end position="40"/>
    </location>
    <ligand>
        <name>ATP</name>
        <dbReference type="ChEBI" id="CHEBI:30616"/>
    </ligand>
</feature>
<name>SSUB2_PSESM</name>
<accession>Q881U6</accession>
<proteinExistence type="inferred from homology"/>
<reference key="1">
    <citation type="journal article" date="2003" name="Proc. Natl. Acad. Sci. U.S.A.">
        <title>The complete genome sequence of the Arabidopsis and tomato pathogen Pseudomonas syringae pv. tomato DC3000.</title>
        <authorList>
            <person name="Buell C.R."/>
            <person name="Joardar V."/>
            <person name="Lindeberg M."/>
            <person name="Selengut J."/>
            <person name="Paulsen I.T."/>
            <person name="Gwinn M.L."/>
            <person name="Dodson R.J."/>
            <person name="DeBoy R.T."/>
            <person name="Durkin A.S."/>
            <person name="Kolonay J.F."/>
            <person name="Madupu R."/>
            <person name="Daugherty S.C."/>
            <person name="Brinkac L.M."/>
            <person name="Beanan M.J."/>
            <person name="Haft D.H."/>
            <person name="Nelson W.C."/>
            <person name="Davidsen T.M."/>
            <person name="Zafar N."/>
            <person name="Zhou L."/>
            <person name="Liu J."/>
            <person name="Yuan Q."/>
            <person name="Khouri H.M."/>
            <person name="Fedorova N.B."/>
            <person name="Tran B."/>
            <person name="Russell D."/>
            <person name="Berry K.J."/>
            <person name="Utterback T.R."/>
            <person name="Van Aken S.E."/>
            <person name="Feldblyum T.V."/>
            <person name="D'Ascenzo M."/>
            <person name="Deng W.-L."/>
            <person name="Ramos A.R."/>
            <person name="Alfano J.R."/>
            <person name="Cartinhour S."/>
            <person name="Chatterjee A.K."/>
            <person name="Delaney T.P."/>
            <person name="Lazarowitz S.G."/>
            <person name="Martin G.B."/>
            <person name="Schneider D.J."/>
            <person name="Tang X."/>
            <person name="Bender C.L."/>
            <person name="White O."/>
            <person name="Fraser C.M."/>
            <person name="Collmer A."/>
        </authorList>
    </citation>
    <scope>NUCLEOTIDE SEQUENCE [LARGE SCALE GENOMIC DNA]</scope>
    <source>
        <strain>ATCC BAA-871 / DC3000</strain>
    </source>
</reference>